<protein>
    <recommendedName>
        <fullName evidence="1">Phycoerythrobilin:ferredoxin oxidoreductase</fullName>
        <ecNumber evidence="1">1.3.7.3</ecNumber>
    </recommendedName>
</protein>
<reference key="1">
    <citation type="journal article" date="2007" name="PLoS Genet.">
        <title>Patterns and implications of gene gain and loss in the evolution of Prochlorococcus.</title>
        <authorList>
            <person name="Kettler G.C."/>
            <person name="Martiny A.C."/>
            <person name="Huang K."/>
            <person name="Zucker J."/>
            <person name="Coleman M.L."/>
            <person name="Rodrigue S."/>
            <person name="Chen F."/>
            <person name="Lapidus A."/>
            <person name="Ferriera S."/>
            <person name="Johnson J."/>
            <person name="Steglich C."/>
            <person name="Church G.M."/>
            <person name="Richardson P."/>
            <person name="Chisholm S.W."/>
        </authorList>
    </citation>
    <scope>NUCLEOTIDE SEQUENCE [LARGE SCALE GENOMIC DNA]</scope>
    <source>
        <strain>NATL1A</strain>
    </source>
</reference>
<dbReference type="EC" id="1.3.7.3" evidence="1"/>
<dbReference type="EMBL" id="CP000553">
    <property type="protein sequence ID" value="ABM76598.1"/>
    <property type="molecule type" value="Genomic_DNA"/>
</dbReference>
<dbReference type="RefSeq" id="WP_011824548.1">
    <property type="nucleotide sequence ID" value="NC_008819.1"/>
</dbReference>
<dbReference type="SMR" id="A2C538"/>
<dbReference type="KEGG" id="pme:NATL1_20421"/>
<dbReference type="eggNOG" id="ENOG502Z8GK">
    <property type="taxonomic scope" value="Bacteria"/>
</dbReference>
<dbReference type="HOGENOM" id="CLU_086208_1_0_3"/>
<dbReference type="Proteomes" id="UP000002592">
    <property type="component" value="Chromosome"/>
</dbReference>
<dbReference type="GO" id="GO:0050897">
    <property type="term" value="F:cobalt ion binding"/>
    <property type="evidence" value="ECO:0007669"/>
    <property type="project" value="InterPro"/>
</dbReference>
<dbReference type="GO" id="GO:0050618">
    <property type="term" value="F:phycoerythrobilin:ferredoxin oxidoreductase activity"/>
    <property type="evidence" value="ECO:0007669"/>
    <property type="project" value="UniProtKB-UniRule"/>
</dbReference>
<dbReference type="GO" id="GO:0010024">
    <property type="term" value="P:phytochromobilin biosynthetic process"/>
    <property type="evidence" value="ECO:0007669"/>
    <property type="project" value="InterPro"/>
</dbReference>
<dbReference type="Gene3D" id="3.40.1500.20">
    <property type="match status" value="1"/>
</dbReference>
<dbReference type="HAMAP" id="MF_00793">
    <property type="entry name" value="PebB"/>
    <property type="match status" value="1"/>
</dbReference>
<dbReference type="InterPro" id="IPR009249">
    <property type="entry name" value="Ferredoxin-dep_bilin_Rdtase"/>
</dbReference>
<dbReference type="InterPro" id="IPR022827">
    <property type="entry name" value="Phycoerythrobilin_Fdx_Rdtase"/>
</dbReference>
<dbReference type="NCBIfam" id="NF009722">
    <property type="entry name" value="PRK13249.1"/>
    <property type="match status" value="1"/>
</dbReference>
<dbReference type="PANTHER" id="PTHR34557">
    <property type="entry name" value="PHYTOCHROMOBILIN:FERREDOXIN OXIDOREDUCTASE, CHLOROPLASTIC"/>
    <property type="match status" value="1"/>
</dbReference>
<dbReference type="PANTHER" id="PTHR34557:SF1">
    <property type="entry name" value="PHYTOCHROMOBILIN:FERREDOXIN OXIDOREDUCTASE, CHLOROPLASTIC"/>
    <property type="match status" value="1"/>
</dbReference>
<dbReference type="Pfam" id="PF05996">
    <property type="entry name" value="Fe_bilin_red"/>
    <property type="match status" value="1"/>
</dbReference>
<name>PEBB_PROM1</name>
<sequence>MQIIRNNSQDPISISNWRWACFLDETIKAFSTFQTRPYQIDNDFLFRESFFGSSSNPKKVILETWGLKMEKIRQARCACLQAGEITSVMNLVISPLNNYDLPFFGADFVTLPNGHLIALDLQPALKDDINHTQHVWNKLKPIHAHWQSKIPTGGDIPSDARQYFSPAFLWSRIPLGEEGDNLITQTIKPAFDEYLNCFFDLLRDAKITSKERSFQLLNGQKKYMRYRAEKDPARGMLRSFFGEVWTESYINNILFDLK</sequence>
<proteinExistence type="inferred from homology"/>
<comment type="function">
    <text evidence="1">Catalyzes the two-electron reduction of the C2 and C3(1) diene system of 15,16-dihydrobiliverdin.</text>
</comment>
<comment type="catalytic activity">
    <reaction evidence="1">
        <text>(3Z)-phycoerythrobilin + oxidized 2[4Fe-4S]-[ferredoxin] = 15,16-dihydrobiliverdin + reduced 2[4Fe-4S]-[ferredoxin] + 2 H(+)</text>
        <dbReference type="Rhea" id="RHEA:22092"/>
        <dbReference type="Rhea" id="RHEA-COMP:10002"/>
        <dbReference type="Rhea" id="RHEA-COMP:10004"/>
        <dbReference type="ChEBI" id="CHEBI:15378"/>
        <dbReference type="ChEBI" id="CHEBI:33722"/>
        <dbReference type="ChEBI" id="CHEBI:33723"/>
        <dbReference type="ChEBI" id="CHEBI:57438"/>
        <dbReference type="ChEBI" id="CHEBI:57899"/>
        <dbReference type="EC" id="1.3.7.3"/>
    </reaction>
</comment>
<comment type="similarity">
    <text evidence="1">Belongs to the HY2 family.</text>
</comment>
<accession>A2C538</accession>
<keyword id="KW-0560">Oxidoreductase</keyword>
<organism>
    <name type="scientific">Prochlorococcus marinus (strain NATL1A)</name>
    <dbReference type="NCBI Taxonomy" id="167555"/>
    <lineage>
        <taxon>Bacteria</taxon>
        <taxon>Bacillati</taxon>
        <taxon>Cyanobacteriota</taxon>
        <taxon>Cyanophyceae</taxon>
        <taxon>Synechococcales</taxon>
        <taxon>Prochlorococcaceae</taxon>
        <taxon>Prochlorococcus</taxon>
    </lineage>
</organism>
<evidence type="ECO:0000255" key="1">
    <source>
        <dbReference type="HAMAP-Rule" id="MF_00793"/>
    </source>
</evidence>
<feature type="chain" id="PRO_1000046927" description="Phycoerythrobilin:ferredoxin oxidoreductase">
    <location>
        <begin position="1"/>
        <end position="258"/>
    </location>
</feature>
<gene>
    <name evidence="1" type="primary">pebB</name>
    <name type="ordered locus">NATL1_20421</name>
</gene>